<protein>
    <recommendedName>
        <fullName evidence="1">NH(3)-dependent NAD(+) synthetase</fullName>
        <ecNumber evidence="1">6.3.1.5</ecNumber>
    </recommendedName>
</protein>
<proteinExistence type="inferred from homology"/>
<dbReference type="EC" id="6.3.1.5" evidence="1"/>
<dbReference type="EMBL" id="AE013218">
    <property type="protein sequence ID" value="AAM67735.1"/>
    <property type="molecule type" value="Genomic_DNA"/>
</dbReference>
<dbReference type="RefSeq" id="WP_011053702.1">
    <property type="nucleotide sequence ID" value="NC_004061.1"/>
</dbReference>
<dbReference type="SMR" id="Q8K9W7"/>
<dbReference type="STRING" id="198804.BUsg_168"/>
<dbReference type="GeneID" id="93003637"/>
<dbReference type="KEGG" id="bas:BUsg_168"/>
<dbReference type="eggNOG" id="COG0171">
    <property type="taxonomic scope" value="Bacteria"/>
</dbReference>
<dbReference type="HOGENOM" id="CLU_059327_3_0_6"/>
<dbReference type="UniPathway" id="UPA00253">
    <property type="reaction ID" value="UER00333"/>
</dbReference>
<dbReference type="Proteomes" id="UP000000416">
    <property type="component" value="Chromosome"/>
</dbReference>
<dbReference type="GO" id="GO:0005737">
    <property type="term" value="C:cytoplasm"/>
    <property type="evidence" value="ECO:0007669"/>
    <property type="project" value="InterPro"/>
</dbReference>
<dbReference type="GO" id="GO:0005524">
    <property type="term" value="F:ATP binding"/>
    <property type="evidence" value="ECO:0007669"/>
    <property type="project" value="UniProtKB-UniRule"/>
</dbReference>
<dbReference type="GO" id="GO:0004359">
    <property type="term" value="F:glutaminase activity"/>
    <property type="evidence" value="ECO:0007669"/>
    <property type="project" value="InterPro"/>
</dbReference>
<dbReference type="GO" id="GO:0046872">
    <property type="term" value="F:metal ion binding"/>
    <property type="evidence" value="ECO:0007669"/>
    <property type="project" value="UniProtKB-KW"/>
</dbReference>
<dbReference type="GO" id="GO:0003952">
    <property type="term" value="F:NAD+ synthase (glutamine-hydrolyzing) activity"/>
    <property type="evidence" value="ECO:0007669"/>
    <property type="project" value="InterPro"/>
</dbReference>
<dbReference type="GO" id="GO:0008795">
    <property type="term" value="F:NAD+ synthase activity"/>
    <property type="evidence" value="ECO:0007669"/>
    <property type="project" value="UniProtKB-UniRule"/>
</dbReference>
<dbReference type="GO" id="GO:0009435">
    <property type="term" value="P:NAD biosynthetic process"/>
    <property type="evidence" value="ECO:0007669"/>
    <property type="project" value="UniProtKB-UniRule"/>
</dbReference>
<dbReference type="CDD" id="cd00553">
    <property type="entry name" value="NAD_synthase"/>
    <property type="match status" value="1"/>
</dbReference>
<dbReference type="Gene3D" id="3.40.50.620">
    <property type="entry name" value="HUPs"/>
    <property type="match status" value="1"/>
</dbReference>
<dbReference type="HAMAP" id="MF_00193">
    <property type="entry name" value="NadE_ammonia_dep"/>
    <property type="match status" value="1"/>
</dbReference>
<dbReference type="InterPro" id="IPR022310">
    <property type="entry name" value="NAD/GMP_synthase"/>
</dbReference>
<dbReference type="InterPro" id="IPR003694">
    <property type="entry name" value="NAD_synthase"/>
</dbReference>
<dbReference type="InterPro" id="IPR022926">
    <property type="entry name" value="NH(3)-dep_NAD(+)_synth"/>
</dbReference>
<dbReference type="InterPro" id="IPR014729">
    <property type="entry name" value="Rossmann-like_a/b/a_fold"/>
</dbReference>
<dbReference type="NCBIfam" id="TIGR00552">
    <property type="entry name" value="nadE"/>
    <property type="match status" value="1"/>
</dbReference>
<dbReference type="NCBIfam" id="NF001979">
    <property type="entry name" value="PRK00768.1"/>
    <property type="match status" value="1"/>
</dbReference>
<dbReference type="PANTHER" id="PTHR23090">
    <property type="entry name" value="NH 3 /GLUTAMINE-DEPENDENT NAD + SYNTHETASE"/>
    <property type="match status" value="1"/>
</dbReference>
<dbReference type="PANTHER" id="PTHR23090:SF7">
    <property type="entry name" value="NH(3)-DEPENDENT NAD(+) SYNTHETASE"/>
    <property type="match status" value="1"/>
</dbReference>
<dbReference type="Pfam" id="PF02540">
    <property type="entry name" value="NAD_synthase"/>
    <property type="match status" value="1"/>
</dbReference>
<dbReference type="SUPFAM" id="SSF52402">
    <property type="entry name" value="Adenine nucleotide alpha hydrolases-like"/>
    <property type="match status" value="1"/>
</dbReference>
<evidence type="ECO:0000255" key="1">
    <source>
        <dbReference type="HAMAP-Rule" id="MF_00193"/>
    </source>
</evidence>
<evidence type="ECO:0000305" key="2"/>
<organism>
    <name type="scientific">Buchnera aphidicola subsp. Schizaphis graminum (strain Sg)</name>
    <dbReference type="NCBI Taxonomy" id="198804"/>
    <lineage>
        <taxon>Bacteria</taxon>
        <taxon>Pseudomonadati</taxon>
        <taxon>Pseudomonadota</taxon>
        <taxon>Gammaproteobacteria</taxon>
        <taxon>Enterobacterales</taxon>
        <taxon>Erwiniaceae</taxon>
        <taxon>Buchnera</taxon>
    </lineage>
</organism>
<comment type="function">
    <text evidence="1">Catalyzes the ATP-dependent amidation of deamido-NAD to form NAD. Uses ammonia as a nitrogen source.</text>
</comment>
<comment type="catalytic activity">
    <reaction evidence="1">
        <text>deamido-NAD(+) + NH4(+) + ATP = AMP + diphosphate + NAD(+) + H(+)</text>
        <dbReference type="Rhea" id="RHEA:21188"/>
        <dbReference type="ChEBI" id="CHEBI:15378"/>
        <dbReference type="ChEBI" id="CHEBI:28938"/>
        <dbReference type="ChEBI" id="CHEBI:30616"/>
        <dbReference type="ChEBI" id="CHEBI:33019"/>
        <dbReference type="ChEBI" id="CHEBI:57540"/>
        <dbReference type="ChEBI" id="CHEBI:58437"/>
        <dbReference type="ChEBI" id="CHEBI:456215"/>
        <dbReference type="EC" id="6.3.1.5"/>
    </reaction>
</comment>
<comment type="pathway">
    <text evidence="1">Cofactor biosynthesis; NAD(+) biosynthesis; NAD(+) from deamido-NAD(+) (ammonia route): step 1/1.</text>
</comment>
<comment type="subunit">
    <text evidence="1">Homodimer.</text>
</comment>
<comment type="similarity">
    <text evidence="1 2">Belongs to the NAD synthetase family.</text>
</comment>
<reference key="1">
    <citation type="journal article" date="2002" name="Science">
        <title>50 million years of genomic stasis in endosymbiotic bacteria.</title>
        <authorList>
            <person name="Tamas I."/>
            <person name="Klasson L."/>
            <person name="Canbaeck B."/>
            <person name="Naeslund A.K."/>
            <person name="Eriksson A.-S."/>
            <person name="Wernegreen J.J."/>
            <person name="Sandstroem J.P."/>
            <person name="Moran N.A."/>
            <person name="Andersson S.G.E."/>
        </authorList>
    </citation>
    <scope>NUCLEOTIDE SEQUENCE [LARGE SCALE GENOMIC DNA]</scope>
    <source>
        <strain>Sg</strain>
    </source>
</reference>
<sequence>MTLQKKIIELLGVKPLIIPKKEIENRIQILKRYLIENTHLKTLIVGISGGQDSTLTGKLCQLSIQELRKEKKEKSYQFIALRLPYGVQIDEKDCRDAINFINPDQIFTINIKNAVLNSERSLKKQGIQISDYIKGNEKARERMKVQYSFAAITNGLVVGTGNAAENVTGFFTKYGDNGTDVNLISKLNKRQGKFLLKELNCPKHLYLKKPTADLEDEKPQKEDEVALGIKYNIIDDYLEGKKVNSLNKQIIERLYLTTEHKRKIINLG</sequence>
<name>NADE_BUCAP</name>
<accession>Q8K9W7</accession>
<keyword id="KW-0067">ATP-binding</keyword>
<keyword id="KW-0436">Ligase</keyword>
<keyword id="KW-0460">Magnesium</keyword>
<keyword id="KW-0479">Metal-binding</keyword>
<keyword id="KW-0520">NAD</keyword>
<keyword id="KW-0547">Nucleotide-binding</keyword>
<feature type="chain" id="PRO_0000152161" description="NH(3)-dependent NAD(+) synthetase">
    <location>
        <begin position="1"/>
        <end position="268"/>
    </location>
</feature>
<feature type="binding site" evidence="1">
    <location>
        <begin position="46"/>
        <end position="53"/>
    </location>
    <ligand>
        <name>ATP</name>
        <dbReference type="ChEBI" id="CHEBI:30616"/>
    </ligand>
</feature>
<feature type="binding site" evidence="1">
    <location>
        <position position="52"/>
    </location>
    <ligand>
        <name>Mg(2+)</name>
        <dbReference type="ChEBI" id="CHEBI:18420"/>
    </ligand>
</feature>
<feature type="binding site" evidence="1">
    <location>
        <position position="140"/>
    </location>
    <ligand>
        <name>deamido-NAD(+)</name>
        <dbReference type="ChEBI" id="CHEBI:58437"/>
    </ligand>
</feature>
<feature type="binding site" evidence="1">
    <location>
        <position position="160"/>
    </location>
    <ligand>
        <name>ATP</name>
        <dbReference type="ChEBI" id="CHEBI:30616"/>
    </ligand>
</feature>
<feature type="binding site" evidence="1">
    <location>
        <position position="165"/>
    </location>
    <ligand>
        <name>Mg(2+)</name>
        <dbReference type="ChEBI" id="CHEBI:18420"/>
    </ligand>
</feature>
<feature type="binding site" evidence="1">
    <location>
        <position position="173"/>
    </location>
    <ligand>
        <name>deamido-NAD(+)</name>
        <dbReference type="ChEBI" id="CHEBI:58437"/>
    </ligand>
</feature>
<feature type="binding site" evidence="1">
    <location>
        <position position="180"/>
    </location>
    <ligand>
        <name>deamido-NAD(+)</name>
        <dbReference type="ChEBI" id="CHEBI:58437"/>
    </ligand>
</feature>
<feature type="binding site" evidence="1">
    <location>
        <position position="189"/>
    </location>
    <ligand>
        <name>ATP</name>
        <dbReference type="ChEBI" id="CHEBI:30616"/>
    </ligand>
</feature>
<feature type="binding site" evidence="1">
    <location>
        <position position="211"/>
    </location>
    <ligand>
        <name>ATP</name>
        <dbReference type="ChEBI" id="CHEBI:30616"/>
    </ligand>
</feature>
<feature type="binding site" evidence="1">
    <location>
        <begin position="260"/>
        <end position="261"/>
    </location>
    <ligand>
        <name>deamido-NAD(+)</name>
        <dbReference type="ChEBI" id="CHEBI:58437"/>
    </ligand>
</feature>
<gene>
    <name evidence="1" type="primary">nadE</name>
    <name type="ordered locus">BUsg_168</name>
</gene>